<accession>Q9I8J6</accession>
<organism>
    <name type="scientific">Xenopus laevis</name>
    <name type="common">African clawed frog</name>
    <dbReference type="NCBI Taxonomy" id="8355"/>
    <lineage>
        <taxon>Eukaryota</taxon>
        <taxon>Metazoa</taxon>
        <taxon>Chordata</taxon>
        <taxon>Craniata</taxon>
        <taxon>Vertebrata</taxon>
        <taxon>Euteleostomi</taxon>
        <taxon>Amphibia</taxon>
        <taxon>Batrachia</taxon>
        <taxon>Anura</taxon>
        <taxon>Pipoidea</taxon>
        <taxon>Pipidae</taxon>
        <taxon>Xenopodinae</taxon>
        <taxon>Xenopus</taxon>
        <taxon>Xenopus</taxon>
    </lineage>
</organism>
<protein>
    <recommendedName>
        <fullName>Probable rRNA-processing protein EBP2</fullName>
    </recommendedName>
    <alternativeName>
        <fullName>Nucleolar protein p40-like protein</fullName>
    </alternativeName>
</protein>
<keyword id="KW-0175">Coiled coil</keyword>
<keyword id="KW-0539">Nucleus</keyword>
<keyword id="KW-1185">Reference proteome</keyword>
<keyword id="KW-0690">Ribosome biogenesis</keyword>
<proteinExistence type="evidence at transcript level"/>
<name>EBP2_XENLA</name>
<feature type="chain" id="PRO_0000119995" description="Probable rRNA-processing protein EBP2">
    <location>
        <begin position="1"/>
        <end position="312"/>
    </location>
</feature>
<feature type="region of interest" description="Disordered" evidence="4">
    <location>
        <begin position="1"/>
        <end position="32"/>
    </location>
</feature>
<feature type="region of interest" description="Disordered" evidence="4">
    <location>
        <begin position="211"/>
        <end position="312"/>
    </location>
</feature>
<feature type="coiled-coil region" evidence="3">
    <location>
        <begin position="140"/>
        <end position="176"/>
    </location>
</feature>
<feature type="compositionally biased region" description="Acidic residues" evidence="4">
    <location>
        <begin position="8"/>
        <end position="20"/>
    </location>
</feature>
<feature type="compositionally biased region" description="Basic residues" evidence="4">
    <location>
        <begin position="282"/>
        <end position="312"/>
    </location>
</feature>
<dbReference type="EMBL" id="AF272361">
    <property type="protein sequence ID" value="AAF81281.1"/>
    <property type="molecule type" value="mRNA"/>
</dbReference>
<dbReference type="RefSeq" id="NP_001167501.1">
    <property type="nucleotide sequence ID" value="NM_001174030.1"/>
</dbReference>
<dbReference type="SMR" id="Q9I8J6"/>
<dbReference type="GeneID" id="100381119"/>
<dbReference type="KEGG" id="xla:100381119"/>
<dbReference type="AGR" id="Xenbase:XB-GENE-998153"/>
<dbReference type="CTD" id="100381119"/>
<dbReference type="Xenbase" id="XB-GENE-998153">
    <property type="gene designation" value="ebna1bp2.L"/>
</dbReference>
<dbReference type="OrthoDB" id="443772at2759"/>
<dbReference type="Proteomes" id="UP000186698">
    <property type="component" value="Chromosome 4L"/>
</dbReference>
<dbReference type="Bgee" id="100381119">
    <property type="expression patterns" value="Expressed in neurula embryo and 19 other cell types or tissues"/>
</dbReference>
<dbReference type="GO" id="GO:0034399">
    <property type="term" value="C:nuclear periphery"/>
    <property type="evidence" value="ECO:0000318"/>
    <property type="project" value="GO_Central"/>
</dbReference>
<dbReference type="GO" id="GO:0005730">
    <property type="term" value="C:nucleolus"/>
    <property type="evidence" value="ECO:0000250"/>
    <property type="project" value="UniProtKB"/>
</dbReference>
<dbReference type="GO" id="GO:0030687">
    <property type="term" value="C:preribosome, large subunit precursor"/>
    <property type="evidence" value="ECO:0000318"/>
    <property type="project" value="GO_Central"/>
</dbReference>
<dbReference type="GO" id="GO:0042273">
    <property type="term" value="P:ribosomal large subunit biogenesis"/>
    <property type="evidence" value="ECO:0000318"/>
    <property type="project" value="GO_Central"/>
</dbReference>
<dbReference type="GO" id="GO:0006364">
    <property type="term" value="P:rRNA processing"/>
    <property type="evidence" value="ECO:0000318"/>
    <property type="project" value="GO_Central"/>
</dbReference>
<dbReference type="InterPro" id="IPR008610">
    <property type="entry name" value="Ebp2"/>
</dbReference>
<dbReference type="PANTHER" id="PTHR13028">
    <property type="entry name" value="RRNA PROCESSING PROTEIN EBNA1-BINDING PROTEIN-RELATED"/>
    <property type="match status" value="1"/>
</dbReference>
<dbReference type="PANTHER" id="PTHR13028:SF0">
    <property type="entry name" value="RRNA-PROCESSING PROTEIN EBP2-RELATED"/>
    <property type="match status" value="1"/>
</dbReference>
<dbReference type="Pfam" id="PF05890">
    <property type="entry name" value="Ebp2"/>
    <property type="match status" value="1"/>
</dbReference>
<evidence type="ECO:0000250" key="1"/>
<evidence type="ECO:0000250" key="2">
    <source>
        <dbReference type="UniProtKB" id="Q99848"/>
    </source>
</evidence>
<evidence type="ECO:0000255" key="3"/>
<evidence type="ECO:0000256" key="4">
    <source>
        <dbReference type="SAM" id="MobiDB-lite"/>
    </source>
</evidence>
<evidence type="ECO:0000305" key="5"/>
<gene>
    <name type="primary">ebna1bp2</name>
</gene>
<comment type="function">
    <text evidence="1">Required for the processing of the 27S pre-rRNA.</text>
</comment>
<comment type="subcellular location">
    <subcellularLocation>
        <location evidence="2">Nucleus</location>
        <location evidence="2">Nucleolus</location>
    </subcellularLocation>
</comment>
<comment type="similarity">
    <text evidence="5">Belongs to the EBP2 family.</text>
</comment>
<reference key="1">
    <citation type="submission" date="2000-05" db="EMBL/GenBank/DDBJ databases">
        <title>A possible role of the 38kDa protein, which is lacking in the gastrula-arrested, maternal-effect mutant embryos, in wild type Xenopus embryos: spatio-temporal distribution of the protein in wild-type embryos, and cloning a gene encoding it.</title>
        <authorList>
            <person name="Tanaka T.S."/>
            <person name="Ikenishi K."/>
        </authorList>
    </citation>
    <scope>NUCLEOTIDE SEQUENCE [MRNA]</scope>
</reference>
<sequence>MLHHEDESSPESDSDFDASELTDKELQEAFSQGKLKPGLNVVLEGKKKPFNDASGLKQSLKDLKNELPWVERLDVTVDPVVDTTGQNGQTDPNTSDINAEDDFQREMCFYRQAQAAVLYSLPRLRKLKVATKRPDDYFAEMAKTDQHMQKIRHKLQLKQASMEKSEKAKQLRALRKYGKKVQVEVLQKRQKEKSAMVTQIKKYQKGLSDKLDFLEGDQTPKKTPNKTGGSAAAQKAKNTPSAKRRYKDQKFGFGGKKKGSKGNTKGSYNDVSGFRGSVAHGKGPHRPGKKGGKNANKRPGKNVRQKMKSKRR</sequence>